<organism>
    <name type="scientific">Lactococcus lactis subsp. cremoris (strain SK11)</name>
    <dbReference type="NCBI Taxonomy" id="272622"/>
    <lineage>
        <taxon>Bacteria</taxon>
        <taxon>Bacillati</taxon>
        <taxon>Bacillota</taxon>
        <taxon>Bacilli</taxon>
        <taxon>Lactobacillales</taxon>
        <taxon>Streptococcaceae</taxon>
        <taxon>Lactococcus</taxon>
        <taxon>Lactococcus cremoris subsp. cremoris</taxon>
    </lineage>
</organism>
<evidence type="ECO:0000255" key="1">
    <source>
        <dbReference type="HAMAP-Rule" id="MF_01554"/>
    </source>
</evidence>
<gene>
    <name evidence="1" type="primary">glmM</name>
    <name type="ordered locus">LACR_0479</name>
</gene>
<feature type="chain" id="PRO_0000301332" description="Phosphoglucosamine mutase">
    <location>
        <begin position="1"/>
        <end position="452"/>
    </location>
</feature>
<feature type="active site" description="Phosphoserine intermediate" evidence="1">
    <location>
        <position position="101"/>
    </location>
</feature>
<feature type="binding site" description="via phosphate group" evidence="1">
    <location>
        <position position="101"/>
    </location>
    <ligand>
        <name>Mg(2+)</name>
        <dbReference type="ChEBI" id="CHEBI:18420"/>
    </ligand>
</feature>
<feature type="binding site" evidence="1">
    <location>
        <position position="241"/>
    </location>
    <ligand>
        <name>Mg(2+)</name>
        <dbReference type="ChEBI" id="CHEBI:18420"/>
    </ligand>
</feature>
<feature type="binding site" evidence="1">
    <location>
        <position position="243"/>
    </location>
    <ligand>
        <name>Mg(2+)</name>
        <dbReference type="ChEBI" id="CHEBI:18420"/>
    </ligand>
</feature>
<feature type="binding site" evidence="1">
    <location>
        <position position="245"/>
    </location>
    <ligand>
        <name>Mg(2+)</name>
        <dbReference type="ChEBI" id="CHEBI:18420"/>
    </ligand>
</feature>
<feature type="modified residue" description="Phosphoserine" evidence="1">
    <location>
        <position position="101"/>
    </location>
</feature>
<keyword id="KW-0413">Isomerase</keyword>
<keyword id="KW-0460">Magnesium</keyword>
<keyword id="KW-0479">Metal-binding</keyword>
<keyword id="KW-0597">Phosphoprotein</keyword>
<name>GLMM_LACLS</name>
<sequence>MGKYFGTDGVRGEANVELTPEMAFKLGRFGGYVLSQHELETPKVYVGRDTRISGQMLASSLISGLLSVGIEVYDLGVIATPGVAYLVKKDGASAGVMISASHNPALDNGIKFFGGDGYKLEDEKELEIEALIDAKEDTLPRPSAQGLGMLHDYIEGVRKYQAFLKTTAEGDFEGYNVVLDTANGASYTSARAVFADLKANLTVIGENPDGLNINVKVGSTHPEAMAKKVVETGSDLGLAFDGDADRLIAVDENGEIVDGDKIMFIVGKYLLEQGKLAQDTLVTTVMSNLGFHLALEEAGINSVITAVGDRYVVEEMKKNNYNFGGEQSGHMIFLDYNTTGDGQLSAIQLLKVMRETGKTLSELASEVTIYPQKLVNVRVKDNAAKKSAMDVPAIQKVISEMETSMNGKGRILVRPSGTEPLLRVMAEAPTHEQVEHVVDTIVEVVEAEIGVK</sequence>
<comment type="function">
    <text evidence="1">Catalyzes the conversion of glucosamine-6-phosphate to glucosamine-1-phosphate.</text>
</comment>
<comment type="catalytic activity">
    <reaction evidence="1">
        <text>alpha-D-glucosamine 1-phosphate = D-glucosamine 6-phosphate</text>
        <dbReference type="Rhea" id="RHEA:23424"/>
        <dbReference type="ChEBI" id="CHEBI:58516"/>
        <dbReference type="ChEBI" id="CHEBI:58725"/>
        <dbReference type="EC" id="5.4.2.10"/>
    </reaction>
</comment>
<comment type="cofactor">
    <cofactor evidence="1">
        <name>Mg(2+)</name>
        <dbReference type="ChEBI" id="CHEBI:18420"/>
    </cofactor>
    <text evidence="1">Binds 1 Mg(2+) ion per subunit.</text>
</comment>
<comment type="PTM">
    <text evidence="1">Activated by phosphorylation.</text>
</comment>
<comment type="similarity">
    <text evidence="1">Belongs to the phosphohexose mutase family.</text>
</comment>
<dbReference type="EC" id="5.4.2.10" evidence="1"/>
<dbReference type="EMBL" id="CP000425">
    <property type="protein sequence ID" value="ABJ72080.1"/>
    <property type="molecule type" value="Genomic_DNA"/>
</dbReference>
<dbReference type="RefSeq" id="WP_011675500.1">
    <property type="nucleotide sequence ID" value="NC_008527.1"/>
</dbReference>
<dbReference type="SMR" id="Q031P2"/>
<dbReference type="KEGG" id="llc:LACR_0479"/>
<dbReference type="HOGENOM" id="CLU_016950_7_0_9"/>
<dbReference type="Proteomes" id="UP000000240">
    <property type="component" value="Chromosome"/>
</dbReference>
<dbReference type="GO" id="GO:0005829">
    <property type="term" value="C:cytosol"/>
    <property type="evidence" value="ECO:0007669"/>
    <property type="project" value="TreeGrafter"/>
</dbReference>
<dbReference type="GO" id="GO:0000287">
    <property type="term" value="F:magnesium ion binding"/>
    <property type="evidence" value="ECO:0007669"/>
    <property type="project" value="UniProtKB-UniRule"/>
</dbReference>
<dbReference type="GO" id="GO:0008966">
    <property type="term" value="F:phosphoglucosamine mutase activity"/>
    <property type="evidence" value="ECO:0007669"/>
    <property type="project" value="UniProtKB-UniRule"/>
</dbReference>
<dbReference type="GO" id="GO:0004615">
    <property type="term" value="F:phosphomannomutase activity"/>
    <property type="evidence" value="ECO:0007669"/>
    <property type="project" value="TreeGrafter"/>
</dbReference>
<dbReference type="GO" id="GO:0005975">
    <property type="term" value="P:carbohydrate metabolic process"/>
    <property type="evidence" value="ECO:0007669"/>
    <property type="project" value="InterPro"/>
</dbReference>
<dbReference type="GO" id="GO:0009252">
    <property type="term" value="P:peptidoglycan biosynthetic process"/>
    <property type="evidence" value="ECO:0007669"/>
    <property type="project" value="TreeGrafter"/>
</dbReference>
<dbReference type="GO" id="GO:0006048">
    <property type="term" value="P:UDP-N-acetylglucosamine biosynthetic process"/>
    <property type="evidence" value="ECO:0007669"/>
    <property type="project" value="TreeGrafter"/>
</dbReference>
<dbReference type="CDD" id="cd05802">
    <property type="entry name" value="GlmM"/>
    <property type="match status" value="1"/>
</dbReference>
<dbReference type="FunFam" id="3.30.310.50:FF:000001">
    <property type="entry name" value="Phosphoglucosamine mutase"/>
    <property type="match status" value="1"/>
</dbReference>
<dbReference type="FunFam" id="3.40.120.10:FF:000001">
    <property type="entry name" value="Phosphoglucosamine mutase"/>
    <property type="match status" value="1"/>
</dbReference>
<dbReference type="FunFam" id="3.40.120.10:FF:000002">
    <property type="entry name" value="Phosphoglucosamine mutase"/>
    <property type="match status" value="1"/>
</dbReference>
<dbReference type="Gene3D" id="3.40.120.10">
    <property type="entry name" value="Alpha-D-Glucose-1,6-Bisphosphate, subunit A, domain 3"/>
    <property type="match status" value="3"/>
</dbReference>
<dbReference type="Gene3D" id="3.30.310.50">
    <property type="entry name" value="Alpha-D-phosphohexomutase, C-terminal domain"/>
    <property type="match status" value="1"/>
</dbReference>
<dbReference type="HAMAP" id="MF_01554_B">
    <property type="entry name" value="GlmM_B"/>
    <property type="match status" value="1"/>
</dbReference>
<dbReference type="InterPro" id="IPR005844">
    <property type="entry name" value="A-D-PHexomutase_a/b/a-I"/>
</dbReference>
<dbReference type="InterPro" id="IPR016055">
    <property type="entry name" value="A-D-PHexomutase_a/b/a-I/II/III"/>
</dbReference>
<dbReference type="InterPro" id="IPR005845">
    <property type="entry name" value="A-D-PHexomutase_a/b/a-II"/>
</dbReference>
<dbReference type="InterPro" id="IPR005846">
    <property type="entry name" value="A-D-PHexomutase_a/b/a-III"/>
</dbReference>
<dbReference type="InterPro" id="IPR005843">
    <property type="entry name" value="A-D-PHexomutase_C"/>
</dbReference>
<dbReference type="InterPro" id="IPR036900">
    <property type="entry name" value="A-D-PHexomutase_C_sf"/>
</dbReference>
<dbReference type="InterPro" id="IPR016066">
    <property type="entry name" value="A-D-PHexomutase_CS"/>
</dbReference>
<dbReference type="InterPro" id="IPR005841">
    <property type="entry name" value="Alpha-D-phosphohexomutase_SF"/>
</dbReference>
<dbReference type="InterPro" id="IPR006352">
    <property type="entry name" value="GlmM_bact"/>
</dbReference>
<dbReference type="InterPro" id="IPR050060">
    <property type="entry name" value="Phosphoglucosamine_mutase"/>
</dbReference>
<dbReference type="NCBIfam" id="TIGR01455">
    <property type="entry name" value="glmM"/>
    <property type="match status" value="1"/>
</dbReference>
<dbReference type="PANTHER" id="PTHR42946:SF1">
    <property type="entry name" value="PHOSPHOGLUCOMUTASE (ALPHA-D-GLUCOSE-1,6-BISPHOSPHATE-DEPENDENT)"/>
    <property type="match status" value="1"/>
</dbReference>
<dbReference type="PANTHER" id="PTHR42946">
    <property type="entry name" value="PHOSPHOHEXOSE MUTASE"/>
    <property type="match status" value="1"/>
</dbReference>
<dbReference type="Pfam" id="PF02878">
    <property type="entry name" value="PGM_PMM_I"/>
    <property type="match status" value="1"/>
</dbReference>
<dbReference type="Pfam" id="PF02879">
    <property type="entry name" value="PGM_PMM_II"/>
    <property type="match status" value="1"/>
</dbReference>
<dbReference type="Pfam" id="PF02880">
    <property type="entry name" value="PGM_PMM_III"/>
    <property type="match status" value="1"/>
</dbReference>
<dbReference type="Pfam" id="PF00408">
    <property type="entry name" value="PGM_PMM_IV"/>
    <property type="match status" value="1"/>
</dbReference>
<dbReference type="PRINTS" id="PR00509">
    <property type="entry name" value="PGMPMM"/>
</dbReference>
<dbReference type="SUPFAM" id="SSF55957">
    <property type="entry name" value="Phosphoglucomutase, C-terminal domain"/>
    <property type="match status" value="1"/>
</dbReference>
<dbReference type="SUPFAM" id="SSF53738">
    <property type="entry name" value="Phosphoglucomutase, first 3 domains"/>
    <property type="match status" value="3"/>
</dbReference>
<dbReference type="PROSITE" id="PS00710">
    <property type="entry name" value="PGM_PMM"/>
    <property type="match status" value="1"/>
</dbReference>
<protein>
    <recommendedName>
        <fullName evidence="1">Phosphoglucosamine mutase</fullName>
        <ecNumber evidence="1">5.4.2.10</ecNumber>
    </recommendedName>
</protein>
<reference key="1">
    <citation type="journal article" date="2006" name="Proc. Natl. Acad. Sci. U.S.A.">
        <title>Comparative genomics of the lactic acid bacteria.</title>
        <authorList>
            <person name="Makarova K.S."/>
            <person name="Slesarev A."/>
            <person name="Wolf Y.I."/>
            <person name="Sorokin A."/>
            <person name="Mirkin B."/>
            <person name="Koonin E.V."/>
            <person name="Pavlov A."/>
            <person name="Pavlova N."/>
            <person name="Karamychev V."/>
            <person name="Polouchine N."/>
            <person name="Shakhova V."/>
            <person name="Grigoriev I."/>
            <person name="Lou Y."/>
            <person name="Rohksar D."/>
            <person name="Lucas S."/>
            <person name="Huang K."/>
            <person name="Goodstein D.M."/>
            <person name="Hawkins T."/>
            <person name="Plengvidhya V."/>
            <person name="Welker D."/>
            <person name="Hughes J."/>
            <person name="Goh Y."/>
            <person name="Benson A."/>
            <person name="Baldwin K."/>
            <person name="Lee J.-H."/>
            <person name="Diaz-Muniz I."/>
            <person name="Dosti B."/>
            <person name="Smeianov V."/>
            <person name="Wechter W."/>
            <person name="Barabote R."/>
            <person name="Lorca G."/>
            <person name="Altermann E."/>
            <person name="Barrangou R."/>
            <person name="Ganesan B."/>
            <person name="Xie Y."/>
            <person name="Rawsthorne H."/>
            <person name="Tamir D."/>
            <person name="Parker C."/>
            <person name="Breidt F."/>
            <person name="Broadbent J.R."/>
            <person name="Hutkins R."/>
            <person name="O'Sullivan D."/>
            <person name="Steele J."/>
            <person name="Unlu G."/>
            <person name="Saier M.H. Jr."/>
            <person name="Klaenhammer T."/>
            <person name="Richardson P."/>
            <person name="Kozyavkin S."/>
            <person name="Weimer B.C."/>
            <person name="Mills D.A."/>
        </authorList>
    </citation>
    <scope>NUCLEOTIDE SEQUENCE [LARGE SCALE GENOMIC DNA]</scope>
    <source>
        <strain>SK11</strain>
    </source>
</reference>
<accession>Q031P2</accession>
<proteinExistence type="inferred from homology"/>